<feature type="chain" id="PRO_0000165934" description="D-hydantoinase">
    <location>
        <begin position="1"/>
        <end position="457"/>
    </location>
</feature>
<feature type="binding site" evidence="4 6">
    <location>
        <position position="57"/>
    </location>
    <ligand>
        <name>Zn(2+)</name>
        <dbReference type="ChEBI" id="CHEBI:29105"/>
        <label>1</label>
    </ligand>
</feature>
<feature type="binding site" evidence="4 6">
    <location>
        <position position="59"/>
    </location>
    <ligand>
        <name>Zn(2+)</name>
        <dbReference type="ChEBI" id="CHEBI:29105"/>
        <label>1</label>
    </ligand>
</feature>
<feature type="binding site" description="via carbamate group" evidence="4 6">
    <location>
        <position position="148"/>
    </location>
    <ligand>
        <name>Zn(2+)</name>
        <dbReference type="ChEBI" id="CHEBI:29105"/>
        <label>1</label>
    </ligand>
</feature>
<feature type="binding site" description="via carbamate group" evidence="4 6">
    <location>
        <position position="148"/>
    </location>
    <ligand>
        <name>Zn(2+)</name>
        <dbReference type="ChEBI" id="CHEBI:29105"/>
        <label>2</label>
    </ligand>
</feature>
<feature type="binding site" evidence="3">
    <location>
        <position position="153"/>
    </location>
    <ligand>
        <name>substrate</name>
    </ligand>
</feature>
<feature type="binding site" evidence="4 6">
    <location>
        <position position="181"/>
    </location>
    <ligand>
        <name>Zn(2+)</name>
        <dbReference type="ChEBI" id="CHEBI:29105"/>
        <label>2</label>
    </ligand>
</feature>
<feature type="binding site" evidence="4 6">
    <location>
        <position position="237"/>
    </location>
    <ligand>
        <name>Zn(2+)</name>
        <dbReference type="ChEBI" id="CHEBI:29105"/>
        <label>2</label>
    </ligand>
</feature>
<feature type="binding site" evidence="1">
    <location>
        <position position="286"/>
    </location>
    <ligand>
        <name>substrate</name>
    </ligand>
</feature>
<feature type="binding site" evidence="4 6">
    <location>
        <position position="313"/>
    </location>
    <ligand>
        <name>Zn(2+)</name>
        <dbReference type="ChEBI" id="CHEBI:29105"/>
        <label>1</label>
    </ligand>
</feature>
<feature type="binding site" evidence="3">
    <location>
        <position position="335"/>
    </location>
    <ligand>
        <name>substrate</name>
    </ligand>
</feature>
<feature type="modified residue" description="Phosphoserine" evidence="2">
    <location>
        <position position="69"/>
    </location>
</feature>
<feature type="modified residue" description="N6-carboxylysine" evidence="4 6">
    <location>
        <position position="148"/>
    </location>
</feature>
<feature type="strand" evidence="7">
    <location>
        <begin position="3"/>
        <end position="12"/>
    </location>
</feature>
<feature type="strand" evidence="7">
    <location>
        <begin position="15"/>
        <end position="24"/>
    </location>
</feature>
<feature type="strand" evidence="7">
    <location>
        <begin position="27"/>
        <end position="33"/>
    </location>
</feature>
<feature type="strand" evidence="7">
    <location>
        <begin position="39"/>
        <end position="43"/>
    </location>
</feature>
<feature type="strand" evidence="7">
    <location>
        <begin position="48"/>
        <end position="51"/>
    </location>
</feature>
<feature type="strand" evidence="7">
    <location>
        <begin position="53"/>
        <end position="58"/>
    </location>
</feature>
<feature type="helix" evidence="7">
    <location>
        <begin position="73"/>
        <end position="82"/>
    </location>
</feature>
<feature type="strand" evidence="7">
    <location>
        <begin position="85"/>
        <end position="93"/>
    </location>
</feature>
<feature type="helix" evidence="7">
    <location>
        <begin position="100"/>
        <end position="111"/>
    </location>
</feature>
<feature type="turn" evidence="7">
    <location>
        <begin position="112"/>
        <end position="114"/>
    </location>
</feature>
<feature type="strand" evidence="7">
    <location>
        <begin position="116"/>
        <end position="124"/>
    </location>
</feature>
<feature type="helix" evidence="7">
    <location>
        <begin position="130"/>
        <end position="135"/>
    </location>
</feature>
<feature type="turn" evidence="7">
    <location>
        <begin position="136"/>
        <end position="138"/>
    </location>
</feature>
<feature type="helix" evidence="7">
    <location>
        <begin position="139"/>
        <end position="142"/>
    </location>
</feature>
<feature type="strand" evidence="7">
    <location>
        <begin position="146"/>
        <end position="153"/>
    </location>
</feature>
<feature type="turn" evidence="7">
    <location>
        <begin position="154"/>
        <end position="157"/>
    </location>
</feature>
<feature type="helix" evidence="7">
    <location>
        <begin position="161"/>
        <end position="174"/>
    </location>
</feature>
<feature type="strand" evidence="7">
    <location>
        <begin position="177"/>
        <end position="181"/>
    </location>
</feature>
<feature type="helix" evidence="7">
    <location>
        <begin position="185"/>
        <end position="197"/>
    </location>
</feature>
<feature type="helix" evidence="7">
    <location>
        <begin position="204"/>
        <end position="208"/>
    </location>
</feature>
<feature type="helix" evidence="7">
    <location>
        <begin position="212"/>
        <end position="229"/>
    </location>
</feature>
<feature type="strand" evidence="7">
    <location>
        <begin position="233"/>
        <end position="235"/>
    </location>
</feature>
<feature type="helix" evidence="7">
    <location>
        <begin position="241"/>
        <end position="253"/>
    </location>
</feature>
<feature type="strand" evidence="7">
    <location>
        <begin position="257"/>
        <end position="259"/>
    </location>
</feature>
<feature type="helix" evidence="7">
    <location>
        <begin position="263"/>
        <end position="266"/>
    </location>
</feature>
<feature type="helix" evidence="7">
    <location>
        <begin position="270"/>
        <end position="274"/>
    </location>
</feature>
<feature type="turn" evidence="7">
    <location>
        <begin position="276"/>
        <end position="278"/>
    </location>
</feature>
<feature type="helix" evidence="7">
    <location>
        <begin position="279"/>
        <end position="283"/>
    </location>
</feature>
<feature type="helix" evidence="7">
    <location>
        <begin position="292"/>
        <end position="303"/>
    </location>
</feature>
<feature type="turn" evidence="7">
    <location>
        <begin position="319"/>
        <end position="328"/>
    </location>
</feature>
<feature type="helix" evidence="7">
    <location>
        <begin position="330"/>
        <end position="332"/>
    </location>
</feature>
<feature type="turn" evidence="7">
    <location>
        <begin position="340"/>
        <end position="342"/>
    </location>
</feature>
<feature type="helix" evidence="7">
    <location>
        <begin position="343"/>
        <end position="352"/>
    </location>
</feature>
<feature type="helix" evidence="7">
    <location>
        <begin position="358"/>
        <end position="365"/>
    </location>
</feature>
<feature type="helix" evidence="7">
    <location>
        <begin position="367"/>
        <end position="372"/>
    </location>
</feature>
<feature type="turn" evidence="7">
    <location>
        <begin position="376"/>
        <end position="378"/>
    </location>
</feature>
<feature type="strand" evidence="7">
    <location>
        <begin position="379"/>
        <end position="381"/>
    </location>
</feature>
<feature type="strand" evidence="7">
    <location>
        <begin position="390"/>
        <end position="400"/>
    </location>
</feature>
<feature type="helix" evidence="7">
    <location>
        <begin position="403"/>
        <end position="405"/>
    </location>
</feature>
<feature type="turn" evidence="7">
    <location>
        <begin position="414"/>
        <end position="417"/>
    </location>
</feature>
<feature type="strand" evidence="7">
    <location>
        <begin position="419"/>
        <end position="429"/>
    </location>
</feature>
<feature type="strand" evidence="7">
    <location>
        <begin position="432"/>
        <end position="436"/>
    </location>
</feature>
<name>HYDA_RALPI</name>
<accession>Q8VTT5</accession>
<protein>
    <recommendedName>
        <fullName>D-hydantoinase</fullName>
        <ecNumber>3.5.2.-</ecNumber>
    </recommendedName>
</protein>
<organism>
    <name type="scientific">Ralstonia pickettii</name>
    <name type="common">Burkholderia pickettii</name>
    <dbReference type="NCBI Taxonomy" id="329"/>
    <lineage>
        <taxon>Bacteria</taxon>
        <taxon>Pseudomonadati</taxon>
        <taxon>Pseudomonadota</taxon>
        <taxon>Betaproteobacteria</taxon>
        <taxon>Burkholderiales</taxon>
        <taxon>Burkholderiaceae</taxon>
        <taxon>Ralstonia</taxon>
    </lineage>
</organism>
<gene>
    <name type="primary">hyuA</name>
</gene>
<comment type="function">
    <text evidence="1">Catalyzes the stereospecific hydrolysis of the cyclic amide bond of D-hydantoin derivatives.</text>
</comment>
<comment type="cofactor">
    <cofactor evidence="4">
        <name>Zn(2+)</name>
        <dbReference type="ChEBI" id="CHEBI:29105"/>
    </cofactor>
    <text evidence="4">Binds 2 Zn(2+) ions per subunit.</text>
</comment>
<comment type="subunit">
    <text evidence="4">Homodimer and homotetramer.</text>
</comment>
<comment type="PTM">
    <text evidence="4">Carboxylation allows a single lysine to coordinate two zinc ions.</text>
</comment>
<comment type="similarity">
    <text evidence="5">Belongs to the metallo-dependent hydrolases superfamily. Hydantoinase/dihydropyrimidinase family.</text>
</comment>
<evidence type="ECO:0000250" key="1"/>
<evidence type="ECO:0000250" key="2">
    <source>
        <dbReference type="UniProtKB" id="Q14117"/>
    </source>
</evidence>
<evidence type="ECO:0000250" key="3">
    <source>
        <dbReference type="UniProtKB" id="Q9P903"/>
    </source>
</evidence>
<evidence type="ECO:0000269" key="4">
    <source>
    </source>
</evidence>
<evidence type="ECO:0000305" key="5"/>
<evidence type="ECO:0007744" key="6">
    <source>
        <dbReference type="PDB" id="1NFG"/>
    </source>
</evidence>
<evidence type="ECO:0007829" key="7">
    <source>
        <dbReference type="PDB" id="1NFG"/>
    </source>
</evidence>
<dbReference type="EC" id="3.5.2.-"/>
<dbReference type="EMBL" id="AF320814">
    <property type="protein sequence ID" value="AAL37185.1"/>
    <property type="molecule type" value="Genomic_DNA"/>
</dbReference>
<dbReference type="PDB" id="1NFG">
    <property type="method" value="X-ray"/>
    <property type="resolution" value="2.70 A"/>
    <property type="chains" value="A/B/C/D=1-457"/>
</dbReference>
<dbReference type="PDBsum" id="1NFG"/>
<dbReference type="SMR" id="Q8VTT5"/>
<dbReference type="DrugBank" id="DB03801">
    <property type="generic name" value="Lysine Nz-Carboxylic Acid"/>
</dbReference>
<dbReference type="BRENDA" id="3.5.2.2">
    <property type="organism ID" value="5160"/>
</dbReference>
<dbReference type="EvolutionaryTrace" id="Q8VTT5"/>
<dbReference type="GO" id="GO:0005829">
    <property type="term" value="C:cytosol"/>
    <property type="evidence" value="ECO:0007669"/>
    <property type="project" value="TreeGrafter"/>
</dbReference>
<dbReference type="GO" id="GO:0016812">
    <property type="term" value="F:hydrolase activity, acting on carbon-nitrogen (but not peptide) bonds, in cyclic amides"/>
    <property type="evidence" value="ECO:0007669"/>
    <property type="project" value="TreeGrafter"/>
</dbReference>
<dbReference type="GO" id="GO:0046872">
    <property type="term" value="F:metal ion binding"/>
    <property type="evidence" value="ECO:0007669"/>
    <property type="project" value="UniProtKB-KW"/>
</dbReference>
<dbReference type="CDD" id="cd01314">
    <property type="entry name" value="D-HYD"/>
    <property type="match status" value="1"/>
</dbReference>
<dbReference type="FunFam" id="3.20.20.140:FF:000217">
    <property type="entry name" value="Dihydropyrimidinase-related protein 1"/>
    <property type="match status" value="1"/>
</dbReference>
<dbReference type="Gene3D" id="3.20.20.140">
    <property type="entry name" value="Metal-dependent hydrolases"/>
    <property type="match status" value="1"/>
</dbReference>
<dbReference type="Gene3D" id="2.30.40.10">
    <property type="entry name" value="Urease, subunit C, domain 1"/>
    <property type="match status" value="1"/>
</dbReference>
<dbReference type="InterPro" id="IPR006680">
    <property type="entry name" value="Amidohydro-rel"/>
</dbReference>
<dbReference type="InterPro" id="IPR011778">
    <property type="entry name" value="Hydantoinase/dihydroPyrase"/>
</dbReference>
<dbReference type="InterPro" id="IPR011059">
    <property type="entry name" value="Metal-dep_hydrolase_composite"/>
</dbReference>
<dbReference type="InterPro" id="IPR032466">
    <property type="entry name" value="Metal_Hydrolase"/>
</dbReference>
<dbReference type="InterPro" id="IPR050378">
    <property type="entry name" value="Metallo-dep_Hydrolases_sf"/>
</dbReference>
<dbReference type="InterPro" id="IPR011612">
    <property type="entry name" value="Urease_alpha_N_dom"/>
</dbReference>
<dbReference type="NCBIfam" id="TIGR02033">
    <property type="entry name" value="D-hydantoinase"/>
    <property type="match status" value="1"/>
</dbReference>
<dbReference type="PANTHER" id="PTHR11647:SF1">
    <property type="entry name" value="COLLAPSIN RESPONSE MEDIATOR PROTEIN"/>
    <property type="match status" value="1"/>
</dbReference>
<dbReference type="PANTHER" id="PTHR11647">
    <property type="entry name" value="HYDRANTOINASE/DIHYDROPYRIMIDINASE FAMILY MEMBER"/>
    <property type="match status" value="1"/>
</dbReference>
<dbReference type="Pfam" id="PF01979">
    <property type="entry name" value="Amidohydro_1"/>
    <property type="match status" value="1"/>
</dbReference>
<dbReference type="Pfam" id="PF00449">
    <property type="entry name" value="Urease_alpha"/>
    <property type="match status" value="1"/>
</dbReference>
<dbReference type="SUPFAM" id="SSF51338">
    <property type="entry name" value="Composite domain of metallo-dependent hydrolases"/>
    <property type="match status" value="2"/>
</dbReference>
<dbReference type="SUPFAM" id="SSF51556">
    <property type="entry name" value="Metallo-dependent hydrolases"/>
    <property type="match status" value="1"/>
</dbReference>
<reference key="1">
    <citation type="submission" date="2000-11" db="EMBL/GenBank/DDBJ databases">
        <title>Cloning, sequencing and expression of a hydantoinase gene of Burholderia pickettii.</title>
        <authorList>
            <person name="Xu Z."/>
            <person name="Jiang W.-H."/>
            <person name="Yang Y.-L."/>
        </authorList>
    </citation>
    <scope>NUCLEOTIDE SEQUENCE [GENOMIC DNA]</scope>
</reference>
<reference key="2">
    <citation type="journal article" date="2003" name="J. Bacteriol.">
        <title>Crystal structure of D-hydantoinase from Burkholderia pickettii at a resolution of 2.7 Angstroms: insights into the molecular basis of enzyme thermostability.</title>
        <authorList>
            <person name="Xu Z."/>
            <person name="Liu Y."/>
            <person name="Yang Y."/>
            <person name="Jiang W."/>
            <person name="Arnold E."/>
            <person name="Ding J."/>
        </authorList>
    </citation>
    <scope>X-RAY CRYSTALLOGRAPHY (2.7 ANGSTROMS) IN COMPLEX WITH ZINC IONS</scope>
    <scope>SUBUNIT</scope>
    <scope>CARBOXYLATION AT LYS-148</scope>
    <scope>IDENTIFICATION BY MASS SPECTROMETRY</scope>
</reference>
<proteinExistence type="evidence at protein level"/>
<keyword id="KW-0002">3D-structure</keyword>
<keyword id="KW-0378">Hydrolase</keyword>
<keyword id="KW-0479">Metal-binding</keyword>
<keyword id="KW-0597">Phosphoprotein</keyword>
<keyword id="KW-0862">Zinc</keyword>
<sequence>MDIIIKNGTIVTADGISRADLGIKDGKITQIGGALGPAERTIDAAGRYVFPGGIDVHTHVETVSFNTQSADTFATATVAAACGGTTTIVDFCQQDRGHSLAEAVAKWDGMAGGKSAIDYGYHIIVLDPTDSVIEELEVLPDLGITSFKVFMAYRGMNMIDDVTLLKTLDKAVKTGSLVMVHAENGDAADYLRDKFVAEGKTAPIYHALSRPPRVEAEATARALALAEIVNAPIYIVHVTCEESLEEVMRAKSRGVRALAETCTHYLYLTKEDLERPDFEGAKYVFTPPARAKKDHDVLWNALRNGVFETVSSDHCSWLFKGHKDRGRNDFRAIPNGAPGVEERLMMVYQGVNEGRISLTQFVELVATRPAKVFGMFPQKGTIAVGSDADIVLWDPEAEMVIEQTAMHNAMDYSSYEGHKVKGVPKTVLLRGKVIVDEGSYVGEPTDGKFLKRRKYKQ</sequence>